<protein>
    <recommendedName>
        <fullName evidence="1">Leucine--tRNA ligase</fullName>
        <ecNumber evidence="1">6.1.1.4</ecNumber>
    </recommendedName>
    <alternativeName>
        <fullName evidence="1">Leucyl-tRNA synthetase</fullName>
        <shortName evidence="1">LeuRS</shortName>
    </alternativeName>
</protein>
<feature type="chain" id="PRO_0000152056" description="Leucine--tRNA ligase">
    <location>
        <begin position="1"/>
        <end position="950"/>
    </location>
</feature>
<feature type="short sequence motif" description="'HIGH' region">
    <location>
        <begin position="66"/>
        <end position="77"/>
    </location>
</feature>
<feature type="short sequence motif" description="'KMSKS' region">
    <location>
        <begin position="721"/>
        <end position="725"/>
    </location>
</feature>
<feature type="binding site" evidence="1">
    <location>
        <position position="724"/>
    </location>
    <ligand>
        <name>ATP</name>
        <dbReference type="ChEBI" id="CHEBI:30616"/>
    </ligand>
</feature>
<sequence>MQDTRATESDVPEHRYNAALAGRIERRWQQRWLERGTFHAPNPTGPLAGPTATLPADKLFVQDMFPYPSGAGLHVGHPLGYIATDVFARYHRMRGRNVLHALGYDAFGLPAEQYAVQTGAHPRDTTESNIATMQRQLDRLGLGHDRRRSFATTDPEYYRWTQWIFLQIYNAWYDLELNRARPISELEEQFASGARPAPDGKDWASMSQAERAAVIDSYRLVYQTDSMVNWCPGLGTVLSNEEVTAEGRSERGNFPVFRKRLWQWMMRITAYADRLVDDLDLLDWPENVKAMQRNWIGRSRGAQVRFDSPAGQIEVFTTRPDTLFGATYVVLAPEHDLVDALAAAQWPADTDPRWTGGAATPAEAVAQYRKSIAAKSDLERQENKEKTGVFLGVHAVNPVNGARVPIFIADYVLSGYGTGAIMAVPGHDQRDWEFATAFGLPIVEVISGGDITAAAHTGEGELVNSDYLNGLSVEEAKATVIGRLEADGHGTGTIQYKLRDWLFARQRYWGEPFPIVYDEDGAPHALPESMLPVRLPELDDFAPVTFDPDDADSEPSPPLAKATDWVHVELDLGDGPKKYRRDTNVMPNWAGSSWYQLRYADPTNADAFCAKENEQYWLGPRTAEHGPDDPGGVDLYVGGVEHAVLHLLYARFWQKVLFDLGYVSSSEPYRRLFNQGYIQAFAYTDPRGAYVPAAEVVERDGAFFWTDATGTEIEVSQEYGKIGKSLKNAISPDEVCDQFGADTFRFYEMSMGPLDTSRPWSTKDVVGAHRFLQRVWRLVVDEETGASRVTEDAPTDETLRFLHRTIAGVDEDFAALRDNTAGAKLIELTNHLTKSYPSGTPRAAVEPLVLMLAPLAPHVAEELWERLGHSESLAHGPFPVADPAWLVEETVEYPIQVNGKVRSRIQVPADADNAAIEAAALADEKIAALLAGATPRKLIVVPGRLVNIVA</sequence>
<name>SYL_NOCFA</name>
<organism>
    <name type="scientific">Nocardia farcinica (strain IFM 10152)</name>
    <dbReference type="NCBI Taxonomy" id="247156"/>
    <lineage>
        <taxon>Bacteria</taxon>
        <taxon>Bacillati</taxon>
        <taxon>Actinomycetota</taxon>
        <taxon>Actinomycetes</taxon>
        <taxon>Mycobacteriales</taxon>
        <taxon>Nocardiaceae</taxon>
        <taxon>Nocardia</taxon>
    </lineage>
</organism>
<evidence type="ECO:0000255" key="1">
    <source>
        <dbReference type="HAMAP-Rule" id="MF_00049"/>
    </source>
</evidence>
<reference key="1">
    <citation type="journal article" date="2004" name="Proc. Natl. Acad. Sci. U.S.A.">
        <title>The complete genomic sequence of Nocardia farcinica IFM 10152.</title>
        <authorList>
            <person name="Ishikawa J."/>
            <person name="Yamashita A."/>
            <person name="Mikami Y."/>
            <person name="Hoshino Y."/>
            <person name="Kurita H."/>
            <person name="Hotta K."/>
            <person name="Shiba T."/>
            <person name="Hattori M."/>
        </authorList>
    </citation>
    <scope>NUCLEOTIDE SEQUENCE [LARGE SCALE GENOMIC DNA]</scope>
    <source>
        <strain>IFM 10152</strain>
    </source>
</reference>
<accession>Q5YN65</accession>
<keyword id="KW-0030">Aminoacyl-tRNA synthetase</keyword>
<keyword id="KW-0067">ATP-binding</keyword>
<keyword id="KW-0963">Cytoplasm</keyword>
<keyword id="KW-0436">Ligase</keyword>
<keyword id="KW-0547">Nucleotide-binding</keyword>
<keyword id="KW-0648">Protein biosynthesis</keyword>
<keyword id="KW-1185">Reference proteome</keyword>
<gene>
    <name evidence="1" type="primary">leuS</name>
    <name type="ordered locus">NFA_55240</name>
</gene>
<proteinExistence type="inferred from homology"/>
<dbReference type="EC" id="6.1.1.4" evidence="1"/>
<dbReference type="EMBL" id="AP006618">
    <property type="protein sequence ID" value="BAD60376.1"/>
    <property type="molecule type" value="Genomic_DNA"/>
</dbReference>
<dbReference type="RefSeq" id="WP_011212058.1">
    <property type="nucleotide sequence ID" value="NC_006361.1"/>
</dbReference>
<dbReference type="SMR" id="Q5YN65"/>
<dbReference type="STRING" id="247156.NFA_55240"/>
<dbReference type="GeneID" id="61136093"/>
<dbReference type="KEGG" id="nfa:NFA_55240"/>
<dbReference type="eggNOG" id="COG0495">
    <property type="taxonomic scope" value="Bacteria"/>
</dbReference>
<dbReference type="HOGENOM" id="CLU_004427_0_0_11"/>
<dbReference type="OrthoDB" id="9810365at2"/>
<dbReference type="Proteomes" id="UP000006820">
    <property type="component" value="Chromosome"/>
</dbReference>
<dbReference type="GO" id="GO:0005829">
    <property type="term" value="C:cytosol"/>
    <property type="evidence" value="ECO:0007669"/>
    <property type="project" value="TreeGrafter"/>
</dbReference>
<dbReference type="GO" id="GO:0002161">
    <property type="term" value="F:aminoacyl-tRNA deacylase activity"/>
    <property type="evidence" value="ECO:0007669"/>
    <property type="project" value="InterPro"/>
</dbReference>
<dbReference type="GO" id="GO:0005524">
    <property type="term" value="F:ATP binding"/>
    <property type="evidence" value="ECO:0007669"/>
    <property type="project" value="UniProtKB-UniRule"/>
</dbReference>
<dbReference type="GO" id="GO:0004823">
    <property type="term" value="F:leucine-tRNA ligase activity"/>
    <property type="evidence" value="ECO:0007669"/>
    <property type="project" value="UniProtKB-UniRule"/>
</dbReference>
<dbReference type="GO" id="GO:0006429">
    <property type="term" value="P:leucyl-tRNA aminoacylation"/>
    <property type="evidence" value="ECO:0007669"/>
    <property type="project" value="UniProtKB-UniRule"/>
</dbReference>
<dbReference type="CDD" id="cd07958">
    <property type="entry name" value="Anticodon_Ia_Leu_BEm"/>
    <property type="match status" value="1"/>
</dbReference>
<dbReference type="FunFam" id="3.40.50.620:FF:000056">
    <property type="entry name" value="Leucine--tRNA ligase"/>
    <property type="match status" value="1"/>
</dbReference>
<dbReference type="FunFam" id="3.40.50.620:FF:000060">
    <property type="entry name" value="Leucine--tRNA ligase"/>
    <property type="match status" value="1"/>
</dbReference>
<dbReference type="FunFam" id="3.40.50.620:FF:000087">
    <property type="entry name" value="Leucine--tRNA ligase"/>
    <property type="match status" value="1"/>
</dbReference>
<dbReference type="FunFam" id="3.90.740.10:FF:000017">
    <property type="entry name" value="Leucine--tRNA ligase"/>
    <property type="match status" value="1"/>
</dbReference>
<dbReference type="FunFam" id="1.10.730.10:FF:000011">
    <property type="entry name" value="Leucine--tRNA ligase chloroplastic/mitochondrial"/>
    <property type="match status" value="1"/>
</dbReference>
<dbReference type="Gene3D" id="3.40.50.620">
    <property type="entry name" value="HUPs"/>
    <property type="match status" value="3"/>
</dbReference>
<dbReference type="Gene3D" id="1.10.730.10">
    <property type="entry name" value="Isoleucyl-tRNA Synthetase, Domain 1"/>
    <property type="match status" value="1"/>
</dbReference>
<dbReference type="Gene3D" id="3.90.740.10">
    <property type="entry name" value="Valyl/Leucyl/Isoleucyl-tRNA synthetase, editing domain"/>
    <property type="match status" value="1"/>
</dbReference>
<dbReference type="HAMAP" id="MF_00049_B">
    <property type="entry name" value="Leu_tRNA_synth_B"/>
    <property type="match status" value="1"/>
</dbReference>
<dbReference type="InterPro" id="IPR001412">
    <property type="entry name" value="aa-tRNA-synth_I_CS"/>
</dbReference>
<dbReference type="InterPro" id="IPR002302">
    <property type="entry name" value="Leu-tRNA-ligase"/>
</dbReference>
<dbReference type="InterPro" id="IPR025709">
    <property type="entry name" value="Leu_tRNA-synth_edit"/>
</dbReference>
<dbReference type="InterPro" id="IPR013155">
    <property type="entry name" value="M/V/L/I-tRNA-synth_anticd-bd"/>
</dbReference>
<dbReference type="InterPro" id="IPR015413">
    <property type="entry name" value="Methionyl/Leucyl_tRNA_Synth"/>
</dbReference>
<dbReference type="InterPro" id="IPR014729">
    <property type="entry name" value="Rossmann-like_a/b/a_fold"/>
</dbReference>
<dbReference type="InterPro" id="IPR009080">
    <property type="entry name" value="tRNAsynth_Ia_anticodon-bd"/>
</dbReference>
<dbReference type="InterPro" id="IPR009008">
    <property type="entry name" value="Val/Leu/Ile-tRNA-synth_edit"/>
</dbReference>
<dbReference type="NCBIfam" id="TIGR00396">
    <property type="entry name" value="leuS_bact"/>
    <property type="match status" value="1"/>
</dbReference>
<dbReference type="PANTHER" id="PTHR43740:SF2">
    <property type="entry name" value="LEUCINE--TRNA LIGASE, MITOCHONDRIAL"/>
    <property type="match status" value="1"/>
</dbReference>
<dbReference type="PANTHER" id="PTHR43740">
    <property type="entry name" value="LEUCYL-TRNA SYNTHETASE"/>
    <property type="match status" value="1"/>
</dbReference>
<dbReference type="Pfam" id="PF08264">
    <property type="entry name" value="Anticodon_1"/>
    <property type="match status" value="1"/>
</dbReference>
<dbReference type="Pfam" id="PF13603">
    <property type="entry name" value="tRNA-synt_1_2"/>
    <property type="match status" value="1"/>
</dbReference>
<dbReference type="Pfam" id="PF09334">
    <property type="entry name" value="tRNA-synt_1g"/>
    <property type="match status" value="1"/>
</dbReference>
<dbReference type="PRINTS" id="PR00985">
    <property type="entry name" value="TRNASYNTHLEU"/>
</dbReference>
<dbReference type="SUPFAM" id="SSF47323">
    <property type="entry name" value="Anticodon-binding domain of a subclass of class I aminoacyl-tRNA synthetases"/>
    <property type="match status" value="1"/>
</dbReference>
<dbReference type="SUPFAM" id="SSF52374">
    <property type="entry name" value="Nucleotidylyl transferase"/>
    <property type="match status" value="1"/>
</dbReference>
<dbReference type="SUPFAM" id="SSF50677">
    <property type="entry name" value="ValRS/IleRS/LeuRS editing domain"/>
    <property type="match status" value="1"/>
</dbReference>
<dbReference type="PROSITE" id="PS00178">
    <property type="entry name" value="AA_TRNA_LIGASE_I"/>
    <property type="match status" value="1"/>
</dbReference>
<comment type="catalytic activity">
    <reaction evidence="1">
        <text>tRNA(Leu) + L-leucine + ATP = L-leucyl-tRNA(Leu) + AMP + diphosphate</text>
        <dbReference type="Rhea" id="RHEA:11688"/>
        <dbReference type="Rhea" id="RHEA-COMP:9613"/>
        <dbReference type="Rhea" id="RHEA-COMP:9622"/>
        <dbReference type="ChEBI" id="CHEBI:30616"/>
        <dbReference type="ChEBI" id="CHEBI:33019"/>
        <dbReference type="ChEBI" id="CHEBI:57427"/>
        <dbReference type="ChEBI" id="CHEBI:78442"/>
        <dbReference type="ChEBI" id="CHEBI:78494"/>
        <dbReference type="ChEBI" id="CHEBI:456215"/>
        <dbReference type="EC" id="6.1.1.4"/>
    </reaction>
</comment>
<comment type="subcellular location">
    <subcellularLocation>
        <location evidence="1">Cytoplasm</location>
    </subcellularLocation>
</comment>
<comment type="similarity">
    <text evidence="1">Belongs to the class-I aminoacyl-tRNA synthetase family.</text>
</comment>